<feature type="chain" id="PRO_1000131733" description="Co-chaperone protein HscB">
    <location>
        <begin position="1"/>
        <end position="171"/>
    </location>
</feature>
<feature type="domain" description="J" evidence="1">
    <location>
        <begin position="2"/>
        <end position="74"/>
    </location>
</feature>
<gene>
    <name evidence="1" type="primary">hscB</name>
    <name type="ordered locus">ECH74115_3758</name>
</gene>
<dbReference type="EMBL" id="CP001164">
    <property type="protein sequence ID" value="ACI34940.1"/>
    <property type="molecule type" value="Genomic_DNA"/>
</dbReference>
<dbReference type="RefSeq" id="WP_000384413.1">
    <property type="nucleotide sequence ID" value="NC_011353.1"/>
</dbReference>
<dbReference type="SMR" id="B5Z100"/>
<dbReference type="GeneID" id="75172640"/>
<dbReference type="KEGG" id="ecf:ECH74115_3758"/>
<dbReference type="HOGENOM" id="CLU_068529_2_0_6"/>
<dbReference type="GO" id="GO:1990230">
    <property type="term" value="C:iron-sulfur cluster transfer complex"/>
    <property type="evidence" value="ECO:0007669"/>
    <property type="project" value="TreeGrafter"/>
</dbReference>
<dbReference type="GO" id="GO:0001671">
    <property type="term" value="F:ATPase activator activity"/>
    <property type="evidence" value="ECO:0007669"/>
    <property type="project" value="InterPro"/>
</dbReference>
<dbReference type="GO" id="GO:0051087">
    <property type="term" value="F:protein-folding chaperone binding"/>
    <property type="evidence" value="ECO:0007669"/>
    <property type="project" value="InterPro"/>
</dbReference>
<dbReference type="GO" id="GO:0044571">
    <property type="term" value="P:[2Fe-2S] cluster assembly"/>
    <property type="evidence" value="ECO:0007669"/>
    <property type="project" value="InterPro"/>
</dbReference>
<dbReference type="GO" id="GO:0051259">
    <property type="term" value="P:protein complex oligomerization"/>
    <property type="evidence" value="ECO:0007669"/>
    <property type="project" value="InterPro"/>
</dbReference>
<dbReference type="GO" id="GO:0006457">
    <property type="term" value="P:protein folding"/>
    <property type="evidence" value="ECO:0007669"/>
    <property type="project" value="UniProtKB-UniRule"/>
</dbReference>
<dbReference type="CDD" id="cd06257">
    <property type="entry name" value="DnaJ"/>
    <property type="match status" value="1"/>
</dbReference>
<dbReference type="FunFam" id="1.10.287.110:FF:000008">
    <property type="entry name" value="Co-chaperone protein HscB"/>
    <property type="match status" value="1"/>
</dbReference>
<dbReference type="FunFam" id="1.20.1280.20:FF:000001">
    <property type="entry name" value="Co-chaperone protein HscB"/>
    <property type="match status" value="1"/>
</dbReference>
<dbReference type="Gene3D" id="1.10.287.110">
    <property type="entry name" value="DnaJ domain"/>
    <property type="match status" value="1"/>
</dbReference>
<dbReference type="Gene3D" id="1.20.1280.20">
    <property type="entry name" value="HscB, C-terminal domain"/>
    <property type="match status" value="1"/>
</dbReference>
<dbReference type="HAMAP" id="MF_00682">
    <property type="entry name" value="HscB"/>
    <property type="match status" value="1"/>
</dbReference>
<dbReference type="InterPro" id="IPR001623">
    <property type="entry name" value="DnaJ_domain"/>
</dbReference>
<dbReference type="InterPro" id="IPR004640">
    <property type="entry name" value="HscB"/>
</dbReference>
<dbReference type="InterPro" id="IPR036386">
    <property type="entry name" value="HscB_C_sf"/>
</dbReference>
<dbReference type="InterPro" id="IPR009073">
    <property type="entry name" value="HscB_oligo_C"/>
</dbReference>
<dbReference type="InterPro" id="IPR036869">
    <property type="entry name" value="J_dom_sf"/>
</dbReference>
<dbReference type="NCBIfam" id="TIGR00714">
    <property type="entry name" value="hscB"/>
    <property type="match status" value="1"/>
</dbReference>
<dbReference type="NCBIfam" id="NF003449">
    <property type="entry name" value="PRK05014.1"/>
    <property type="match status" value="1"/>
</dbReference>
<dbReference type="PANTHER" id="PTHR14021">
    <property type="entry name" value="IRON-SULFUR CLUSTER CO-CHAPERONE PROTEIN HSCB"/>
    <property type="match status" value="1"/>
</dbReference>
<dbReference type="PANTHER" id="PTHR14021:SF15">
    <property type="entry name" value="IRON-SULFUR CLUSTER CO-CHAPERONE PROTEIN HSCB"/>
    <property type="match status" value="1"/>
</dbReference>
<dbReference type="Pfam" id="PF07743">
    <property type="entry name" value="HSCB_C"/>
    <property type="match status" value="1"/>
</dbReference>
<dbReference type="SMART" id="SM00271">
    <property type="entry name" value="DnaJ"/>
    <property type="match status" value="1"/>
</dbReference>
<dbReference type="SUPFAM" id="SSF46565">
    <property type="entry name" value="Chaperone J-domain"/>
    <property type="match status" value="1"/>
</dbReference>
<dbReference type="SUPFAM" id="SSF47144">
    <property type="entry name" value="HSC20 (HSCB), C-terminal oligomerisation domain"/>
    <property type="match status" value="1"/>
</dbReference>
<dbReference type="PROSITE" id="PS50076">
    <property type="entry name" value="DNAJ_2"/>
    <property type="match status" value="1"/>
</dbReference>
<proteinExistence type="inferred from homology"/>
<sequence>MDYFTLFGLPARYQLDTQALSLRFQDLQRQYHPDKFASGSQAEQLAAVQQSATINQAWQTLRHPLMRAEYLLSLHGFDLASEQHTVRDTAFLMEQLELREELDEIEQAKDEARLESFIKRVKKMFDTRHQLMVEQLDNETWDAAADTVRKLRFLDKLRSSAEQLEEKLLDF</sequence>
<evidence type="ECO:0000255" key="1">
    <source>
        <dbReference type="HAMAP-Rule" id="MF_00682"/>
    </source>
</evidence>
<organism>
    <name type="scientific">Escherichia coli O157:H7 (strain EC4115 / EHEC)</name>
    <dbReference type="NCBI Taxonomy" id="444450"/>
    <lineage>
        <taxon>Bacteria</taxon>
        <taxon>Pseudomonadati</taxon>
        <taxon>Pseudomonadota</taxon>
        <taxon>Gammaproteobacteria</taxon>
        <taxon>Enterobacterales</taxon>
        <taxon>Enterobacteriaceae</taxon>
        <taxon>Escherichia</taxon>
    </lineage>
</organism>
<accession>B5Z100</accession>
<comment type="function">
    <text evidence="1">Co-chaperone involved in the maturation of iron-sulfur cluster-containing proteins. Seems to help targeting proteins to be folded toward HscA.</text>
</comment>
<comment type="subunit">
    <text evidence="1">Interacts with HscA and stimulates its ATPase activity. Interacts with IscU.</text>
</comment>
<comment type="similarity">
    <text evidence="1">Belongs to the HscB family.</text>
</comment>
<protein>
    <recommendedName>
        <fullName evidence="1">Co-chaperone protein HscB</fullName>
    </recommendedName>
    <alternativeName>
        <fullName evidence="1">Hsc20</fullName>
    </alternativeName>
</protein>
<reference key="1">
    <citation type="journal article" date="2011" name="Proc. Natl. Acad. Sci. U.S.A.">
        <title>Genomic anatomy of Escherichia coli O157:H7 outbreaks.</title>
        <authorList>
            <person name="Eppinger M."/>
            <person name="Mammel M.K."/>
            <person name="Leclerc J.E."/>
            <person name="Ravel J."/>
            <person name="Cebula T.A."/>
        </authorList>
    </citation>
    <scope>NUCLEOTIDE SEQUENCE [LARGE SCALE GENOMIC DNA]</scope>
    <source>
        <strain>EC4115 / EHEC</strain>
    </source>
</reference>
<keyword id="KW-0143">Chaperone</keyword>
<name>HSCB_ECO5E</name>